<organism>
    <name type="scientific">Methanococcus maripaludis (strain C6 / ATCC BAA-1332)</name>
    <dbReference type="NCBI Taxonomy" id="444158"/>
    <lineage>
        <taxon>Archaea</taxon>
        <taxon>Methanobacteriati</taxon>
        <taxon>Methanobacteriota</taxon>
        <taxon>Methanomada group</taxon>
        <taxon>Methanococci</taxon>
        <taxon>Methanococcales</taxon>
        <taxon>Methanococcaceae</taxon>
        <taxon>Methanococcus</taxon>
    </lineage>
</organism>
<evidence type="ECO:0000255" key="1">
    <source>
        <dbReference type="HAMAP-Rule" id="MF_01111"/>
    </source>
</evidence>
<protein>
    <recommendedName>
        <fullName evidence="1">UPF0200 protein MmarC6_1392</fullName>
    </recommendedName>
</protein>
<dbReference type="EMBL" id="CP000867">
    <property type="protein sequence ID" value="ABX02205.1"/>
    <property type="molecule type" value="Genomic_DNA"/>
</dbReference>
<dbReference type="SMR" id="A9AA32"/>
<dbReference type="STRING" id="444158.MmarC6_1392"/>
<dbReference type="KEGG" id="mmx:MmarC6_1392"/>
<dbReference type="eggNOG" id="arCOG01045">
    <property type="taxonomic scope" value="Archaea"/>
</dbReference>
<dbReference type="HOGENOM" id="CLU_096329_1_0_2"/>
<dbReference type="OrthoDB" id="85381at2157"/>
<dbReference type="PhylomeDB" id="A9AA32"/>
<dbReference type="GO" id="GO:0005524">
    <property type="term" value="F:ATP binding"/>
    <property type="evidence" value="ECO:0007669"/>
    <property type="project" value="UniProtKB-UniRule"/>
</dbReference>
<dbReference type="Gene3D" id="3.40.50.300">
    <property type="entry name" value="P-loop containing nucleotide triphosphate hydrolases"/>
    <property type="match status" value="1"/>
</dbReference>
<dbReference type="HAMAP" id="MF_01111">
    <property type="entry name" value="UPF0200"/>
    <property type="match status" value="1"/>
</dbReference>
<dbReference type="InterPro" id="IPR022970">
    <property type="entry name" value="NTP_hydrolase-rel"/>
</dbReference>
<dbReference type="InterPro" id="IPR027417">
    <property type="entry name" value="P-loop_NTPase"/>
</dbReference>
<dbReference type="PANTHER" id="PTHR41930:SF1">
    <property type="entry name" value="DEPHOSPHO-COA KINASE"/>
    <property type="match status" value="1"/>
</dbReference>
<dbReference type="PANTHER" id="PTHR41930">
    <property type="entry name" value="UPF0200 PROTEIN MJ1399"/>
    <property type="match status" value="1"/>
</dbReference>
<dbReference type="Pfam" id="PF13207">
    <property type="entry name" value="AAA_17"/>
    <property type="match status" value="1"/>
</dbReference>
<dbReference type="SUPFAM" id="SSF52540">
    <property type="entry name" value="P-loop containing nucleoside triphosphate hydrolases"/>
    <property type="match status" value="1"/>
</dbReference>
<sequence length="183" mass="20829">MKLIGITGMPGSGKSAITKLAEKYKIIVVSMGDVVRYETSKQGLRLNPENVGNTAVKLREIHGKEAIAVPCLNYVNEKYKCEDFVIIEGIRSIYEVNYLKKHAELDVIAIHSSPKTRFERLSGRNREDDSNDWNTFVERDERELNFSIGSVISLADYMVVNEGNYMDFMNDLENTFKKVINVI</sequence>
<reference key="1">
    <citation type="submission" date="2007-10" db="EMBL/GenBank/DDBJ databases">
        <title>Complete sequence of Methanococcus maripaludis C6.</title>
        <authorList>
            <consortium name="US DOE Joint Genome Institute"/>
            <person name="Copeland A."/>
            <person name="Lucas S."/>
            <person name="Lapidus A."/>
            <person name="Barry K."/>
            <person name="Glavina del Rio T."/>
            <person name="Dalin E."/>
            <person name="Tice H."/>
            <person name="Pitluck S."/>
            <person name="Clum A."/>
            <person name="Schmutz J."/>
            <person name="Larimer F."/>
            <person name="Land M."/>
            <person name="Hauser L."/>
            <person name="Kyrpides N."/>
            <person name="Mikhailova N."/>
            <person name="Sieprawska-Lupa M."/>
            <person name="Whitman W.B."/>
            <person name="Richardson P."/>
        </authorList>
    </citation>
    <scope>NUCLEOTIDE SEQUENCE [LARGE SCALE GENOMIC DNA]</scope>
    <source>
        <strain>C6 / ATCC BAA-1332</strain>
    </source>
</reference>
<gene>
    <name type="ordered locus">MmarC6_1392</name>
</gene>
<comment type="similarity">
    <text evidence="1">Belongs to the UPF0200 family.</text>
</comment>
<name>Y1392_METM6</name>
<accession>A9AA32</accession>
<feature type="chain" id="PRO_1000137119" description="UPF0200 protein MmarC6_1392">
    <location>
        <begin position="1"/>
        <end position="183"/>
    </location>
</feature>
<feature type="binding site" evidence="1">
    <location>
        <begin position="8"/>
        <end position="15"/>
    </location>
    <ligand>
        <name>ATP</name>
        <dbReference type="ChEBI" id="CHEBI:30616"/>
    </ligand>
</feature>
<proteinExistence type="inferred from homology"/>
<keyword id="KW-0067">ATP-binding</keyword>
<keyword id="KW-0547">Nucleotide-binding</keyword>